<protein>
    <recommendedName>
        <fullName>Nucleolar protein 12</fullName>
    </recommendedName>
</protein>
<name>NOP12_EMENI</name>
<accession>Q5BDC8</accession>
<accession>C8VMB9</accession>
<sequence length="520" mass="56210">MGKKSKSQKEAPATESAGSLPFLGGNVSVDPSLASLFEQSAGPVKVPEVPRLGAAPKTKITDVEKDEEESSSAGNDSASEDQFMEDAPESPDAAEEAVQAVPEPPSRKRKRAAGEDLEESYMRRLAKEEQKEQKKRRAERSSSLEEESEDGEKESPQSEDGESEDEGADIPKHEALAGAANDDDELSKSNRTVFLGNVSTKAITSKSAKKELMKHLSSFLSTLPESTGPHKIDSIRFRSTAFASGGKIPKRAAFAKQEIHDDTTPSTNAYAVYSTAQAAKKAPAALNGTVVLDRHLRVDNVAHPAKVDHKRCVFVGNLDFIDNETGTEEGEKKKKNRPPADVEEGLWRTFNAHTKASQSGPAGRGNVESVRVVRDRSTRVGKGFAYVQFYDQNCVEEALLLNDKRFPPLLPRKLRVVRAKKVAKKSVETTGAPKGSDRTLQGRAGKLLGRSSEARLKAAAKKSISQSSLVFEGNRATADGSSRIRVRTKSRGSKAKKDSRSKKRAAAYKAAGGKKAKIGK</sequence>
<reference key="1">
    <citation type="journal article" date="2005" name="Nature">
        <title>Sequencing of Aspergillus nidulans and comparative analysis with A. fumigatus and A. oryzae.</title>
        <authorList>
            <person name="Galagan J.E."/>
            <person name="Calvo S.E."/>
            <person name="Cuomo C."/>
            <person name="Ma L.-J."/>
            <person name="Wortman J.R."/>
            <person name="Batzoglou S."/>
            <person name="Lee S.-I."/>
            <person name="Bastuerkmen M."/>
            <person name="Spevak C.C."/>
            <person name="Clutterbuck J."/>
            <person name="Kapitonov V."/>
            <person name="Jurka J."/>
            <person name="Scazzocchio C."/>
            <person name="Farman M.L."/>
            <person name="Butler J."/>
            <person name="Purcell S."/>
            <person name="Harris S."/>
            <person name="Braus G.H."/>
            <person name="Draht O."/>
            <person name="Busch S."/>
            <person name="D'Enfert C."/>
            <person name="Bouchier C."/>
            <person name="Goldman G.H."/>
            <person name="Bell-Pedersen D."/>
            <person name="Griffiths-Jones S."/>
            <person name="Doonan J.H."/>
            <person name="Yu J."/>
            <person name="Vienken K."/>
            <person name="Pain A."/>
            <person name="Freitag M."/>
            <person name="Selker E.U."/>
            <person name="Archer D.B."/>
            <person name="Penalva M.A."/>
            <person name="Oakley B.R."/>
            <person name="Momany M."/>
            <person name="Tanaka T."/>
            <person name="Kumagai T."/>
            <person name="Asai K."/>
            <person name="Machida M."/>
            <person name="Nierman W.C."/>
            <person name="Denning D.W."/>
            <person name="Caddick M.X."/>
            <person name="Hynes M."/>
            <person name="Paoletti M."/>
            <person name="Fischer R."/>
            <person name="Miller B.L."/>
            <person name="Dyer P.S."/>
            <person name="Sachs M.S."/>
            <person name="Osmani S.A."/>
            <person name="Birren B.W."/>
        </authorList>
    </citation>
    <scope>NUCLEOTIDE SEQUENCE [LARGE SCALE GENOMIC DNA]</scope>
    <source>
        <strain>FGSC A4 / ATCC 38163 / CBS 112.46 / NRRL 194 / M139</strain>
    </source>
</reference>
<reference key="2">
    <citation type="journal article" date="2009" name="Fungal Genet. Biol.">
        <title>The 2008 update of the Aspergillus nidulans genome annotation: a community effort.</title>
        <authorList>
            <person name="Wortman J.R."/>
            <person name="Gilsenan J.M."/>
            <person name="Joardar V."/>
            <person name="Deegan J."/>
            <person name="Clutterbuck J."/>
            <person name="Andersen M.R."/>
            <person name="Archer D."/>
            <person name="Bencina M."/>
            <person name="Braus G."/>
            <person name="Coutinho P."/>
            <person name="von Dohren H."/>
            <person name="Doonan J."/>
            <person name="Driessen A.J."/>
            <person name="Durek P."/>
            <person name="Espeso E."/>
            <person name="Fekete E."/>
            <person name="Flipphi M."/>
            <person name="Estrada C.G."/>
            <person name="Geysens S."/>
            <person name="Goldman G."/>
            <person name="de Groot P.W."/>
            <person name="Hansen K."/>
            <person name="Harris S.D."/>
            <person name="Heinekamp T."/>
            <person name="Helmstaedt K."/>
            <person name="Henrissat B."/>
            <person name="Hofmann G."/>
            <person name="Homan T."/>
            <person name="Horio T."/>
            <person name="Horiuchi H."/>
            <person name="James S."/>
            <person name="Jones M."/>
            <person name="Karaffa L."/>
            <person name="Karanyi Z."/>
            <person name="Kato M."/>
            <person name="Keller N."/>
            <person name="Kelly D.E."/>
            <person name="Kiel J.A."/>
            <person name="Kim J.M."/>
            <person name="van der Klei I.J."/>
            <person name="Klis F.M."/>
            <person name="Kovalchuk A."/>
            <person name="Krasevec N."/>
            <person name="Kubicek C.P."/>
            <person name="Liu B."/>
            <person name="Maccabe A."/>
            <person name="Meyer V."/>
            <person name="Mirabito P."/>
            <person name="Miskei M."/>
            <person name="Mos M."/>
            <person name="Mullins J."/>
            <person name="Nelson D.R."/>
            <person name="Nielsen J."/>
            <person name="Oakley B.R."/>
            <person name="Osmani S.A."/>
            <person name="Pakula T."/>
            <person name="Paszewski A."/>
            <person name="Paulsen I."/>
            <person name="Pilsyk S."/>
            <person name="Pocsi I."/>
            <person name="Punt P.J."/>
            <person name="Ram A.F."/>
            <person name="Ren Q."/>
            <person name="Robellet X."/>
            <person name="Robson G."/>
            <person name="Seiboth B."/>
            <person name="van Solingen P."/>
            <person name="Specht T."/>
            <person name="Sun J."/>
            <person name="Taheri-Talesh N."/>
            <person name="Takeshita N."/>
            <person name="Ussery D."/>
            <person name="vanKuyk P.A."/>
            <person name="Visser H."/>
            <person name="van de Vondervoort P.J."/>
            <person name="de Vries R.P."/>
            <person name="Walton J."/>
            <person name="Xiang X."/>
            <person name="Xiong Y."/>
            <person name="Zeng A.P."/>
            <person name="Brandt B.W."/>
            <person name="Cornell M.J."/>
            <person name="van den Hondel C.A."/>
            <person name="Visser J."/>
            <person name="Oliver S.G."/>
            <person name="Turner G."/>
        </authorList>
    </citation>
    <scope>GENOME REANNOTATION</scope>
    <source>
        <strain>FGSC A4 / ATCC 38163 / CBS 112.46 / NRRL 194 / M139</strain>
    </source>
</reference>
<gene>
    <name type="primary">nop12</name>
    <name type="ORF">AN1452</name>
</gene>
<keyword id="KW-0539">Nucleus</keyword>
<keyword id="KW-1185">Reference proteome</keyword>
<keyword id="KW-0677">Repeat</keyword>
<keyword id="KW-0690">Ribosome biogenesis</keyword>
<keyword id="KW-0694">RNA-binding</keyword>
<keyword id="KW-0698">rRNA processing</keyword>
<evidence type="ECO:0000250" key="1"/>
<evidence type="ECO:0000255" key="2">
    <source>
        <dbReference type="PROSITE-ProRule" id="PRU00176"/>
    </source>
</evidence>
<evidence type="ECO:0000256" key="3">
    <source>
        <dbReference type="SAM" id="MobiDB-lite"/>
    </source>
</evidence>
<evidence type="ECO:0000305" key="4"/>
<dbReference type="EMBL" id="AACD01000022">
    <property type="protein sequence ID" value="EAA64582.1"/>
    <property type="molecule type" value="Genomic_DNA"/>
</dbReference>
<dbReference type="EMBL" id="BN001307">
    <property type="protein sequence ID" value="CBF84884.1"/>
    <property type="molecule type" value="Genomic_DNA"/>
</dbReference>
<dbReference type="RefSeq" id="XP_659056.1">
    <property type="nucleotide sequence ID" value="XM_653964.1"/>
</dbReference>
<dbReference type="SMR" id="Q5BDC8"/>
<dbReference type="FunCoup" id="Q5BDC8">
    <property type="interactions" value="754"/>
</dbReference>
<dbReference type="STRING" id="227321.Q5BDC8"/>
<dbReference type="EnsemblFungi" id="CBF84884">
    <property type="protein sequence ID" value="CBF84884"/>
    <property type="gene ID" value="ANIA_01452"/>
</dbReference>
<dbReference type="KEGG" id="ani:ANIA_01452"/>
<dbReference type="VEuPathDB" id="FungiDB:AN1452"/>
<dbReference type="eggNOG" id="KOG0118">
    <property type="taxonomic scope" value="Eukaryota"/>
</dbReference>
<dbReference type="HOGENOM" id="CLU_006468_2_0_1"/>
<dbReference type="InParanoid" id="Q5BDC8"/>
<dbReference type="OMA" id="NAYAVYT"/>
<dbReference type="OrthoDB" id="442677at2759"/>
<dbReference type="Proteomes" id="UP000000560">
    <property type="component" value="Chromosome VII"/>
</dbReference>
<dbReference type="GO" id="GO:0005730">
    <property type="term" value="C:nucleolus"/>
    <property type="evidence" value="ECO:0000318"/>
    <property type="project" value="GO_Central"/>
</dbReference>
<dbReference type="GO" id="GO:0003723">
    <property type="term" value="F:RNA binding"/>
    <property type="evidence" value="ECO:0000318"/>
    <property type="project" value="GO_Central"/>
</dbReference>
<dbReference type="GO" id="GO:0000463">
    <property type="term" value="P:maturation of LSU-rRNA from tricistronic rRNA transcript (SSU-rRNA, 5.8S rRNA, LSU-rRNA)"/>
    <property type="evidence" value="ECO:0000318"/>
    <property type="project" value="GO_Central"/>
</dbReference>
<dbReference type="Gene3D" id="3.30.70.330">
    <property type="match status" value="2"/>
</dbReference>
<dbReference type="InterPro" id="IPR012677">
    <property type="entry name" value="Nucleotide-bd_a/b_plait_sf"/>
</dbReference>
<dbReference type="InterPro" id="IPR035979">
    <property type="entry name" value="RBD_domain_sf"/>
</dbReference>
<dbReference type="InterPro" id="IPR000504">
    <property type="entry name" value="RRM_dom"/>
</dbReference>
<dbReference type="PANTHER" id="PTHR23236">
    <property type="entry name" value="EUKARYOTIC TRANSLATION INITIATION FACTOR 4B/4H"/>
    <property type="match status" value="1"/>
</dbReference>
<dbReference type="PANTHER" id="PTHR23236:SF25">
    <property type="entry name" value="RNA-BINDING PROTEIN 34"/>
    <property type="match status" value="1"/>
</dbReference>
<dbReference type="Pfam" id="PF00076">
    <property type="entry name" value="RRM_1"/>
    <property type="match status" value="1"/>
</dbReference>
<dbReference type="SMART" id="SM00360">
    <property type="entry name" value="RRM"/>
    <property type="match status" value="2"/>
</dbReference>
<dbReference type="SUPFAM" id="SSF54928">
    <property type="entry name" value="RNA-binding domain, RBD"/>
    <property type="match status" value="2"/>
</dbReference>
<dbReference type="PROSITE" id="PS50102">
    <property type="entry name" value="RRM"/>
    <property type="match status" value="1"/>
</dbReference>
<feature type="chain" id="PRO_0000081669" description="Nucleolar protein 12">
    <location>
        <begin position="1"/>
        <end position="520"/>
    </location>
</feature>
<feature type="domain" description="RRM 1" evidence="2">
    <location>
        <begin position="191"/>
        <end position="303"/>
    </location>
</feature>
<feature type="domain" description="RRM 2" evidence="2">
    <location>
        <begin position="311"/>
        <end position="421"/>
    </location>
</feature>
<feature type="region of interest" description="Disordered" evidence="3">
    <location>
        <begin position="1"/>
        <end position="29"/>
    </location>
</feature>
<feature type="region of interest" description="Disordered" evidence="3">
    <location>
        <begin position="41"/>
        <end position="185"/>
    </location>
</feature>
<feature type="region of interest" description="Disordered" evidence="3">
    <location>
        <begin position="472"/>
        <end position="520"/>
    </location>
</feature>
<feature type="compositionally biased region" description="Acidic residues" evidence="3">
    <location>
        <begin position="78"/>
        <end position="95"/>
    </location>
</feature>
<feature type="compositionally biased region" description="Basic and acidic residues" evidence="3">
    <location>
        <begin position="120"/>
        <end position="132"/>
    </location>
</feature>
<feature type="compositionally biased region" description="Acidic residues" evidence="3">
    <location>
        <begin position="144"/>
        <end position="168"/>
    </location>
</feature>
<feature type="compositionally biased region" description="Basic residues" evidence="3">
    <location>
        <begin position="484"/>
        <end position="520"/>
    </location>
</feature>
<organism>
    <name type="scientific">Emericella nidulans (strain FGSC A4 / ATCC 38163 / CBS 112.46 / NRRL 194 / M139)</name>
    <name type="common">Aspergillus nidulans</name>
    <dbReference type="NCBI Taxonomy" id="227321"/>
    <lineage>
        <taxon>Eukaryota</taxon>
        <taxon>Fungi</taxon>
        <taxon>Dikarya</taxon>
        <taxon>Ascomycota</taxon>
        <taxon>Pezizomycotina</taxon>
        <taxon>Eurotiomycetes</taxon>
        <taxon>Eurotiomycetidae</taxon>
        <taxon>Eurotiales</taxon>
        <taxon>Aspergillaceae</taxon>
        <taxon>Aspergillus</taxon>
        <taxon>Aspergillus subgen. Nidulantes</taxon>
    </lineage>
</organism>
<proteinExistence type="inferred from homology"/>
<comment type="function">
    <text evidence="1">Involved in pre-25S rRNA processing.</text>
</comment>
<comment type="subcellular location">
    <subcellularLocation>
        <location evidence="1">Nucleus</location>
        <location evidence="1">Nucleolus</location>
    </subcellularLocation>
</comment>
<comment type="similarity">
    <text evidence="4">Belongs to the RRM RBM34 family.</text>
</comment>